<keyword id="KW-0010">Activator</keyword>
<keyword id="KW-0238">DNA-binding</keyword>
<keyword id="KW-0244">Early protein</keyword>
<keyword id="KW-1035">Host cytoplasm</keyword>
<keyword id="KW-1048">Host nucleus</keyword>
<keyword id="KW-0945">Host-virus interaction</keyword>
<keyword id="KW-1090">Inhibition of host innate immune response by virus</keyword>
<keyword id="KW-0479">Metal-binding</keyword>
<keyword id="KW-1119">Modulation of host cell apoptosis by virus</keyword>
<keyword id="KW-1185">Reference proteome</keyword>
<keyword id="KW-0804">Transcription</keyword>
<keyword id="KW-0805">Transcription regulation</keyword>
<keyword id="KW-0899">Viral immunoevasion</keyword>
<keyword id="KW-0862">Zinc</keyword>
<keyword id="KW-0863">Zinc-finger</keyword>
<protein>
    <recommendedName>
        <fullName evidence="1">Protein E6</fullName>
    </recommendedName>
</protein>
<proteinExistence type="inferred from homology"/>
<name>VE6_HPV27</name>
<gene>
    <name evidence="1" type="primary">E6</name>
</gene>
<sequence length="159" mass="18161">MRTRAGMSEENPCPRNIFLLCKQYGLELEDLRLLCVYCRRALSDADVLAFAIKELSVVWRKGFPFGACGKCLIAAGKLRQYRHWHYSCYGDTVETETGIPIPQLFMRCYICHKPLSWEEKEALLVGNKRFHNISGRWTGHCMQCGSTCTAPDPASRTLH</sequence>
<organismHost>
    <name type="scientific">Homo sapiens</name>
    <name type="common">Human</name>
    <dbReference type="NCBI Taxonomy" id="9606"/>
</organismHost>
<evidence type="ECO:0000255" key="1">
    <source>
        <dbReference type="HAMAP-Rule" id="MF_04006"/>
    </source>
</evidence>
<evidence type="ECO:0000305" key="2"/>
<reference key="1">
    <citation type="journal article" date="1994" name="Curr. Top. Microbiol. Immunol.">
        <title>Primer-directed sequencing of human papillomavirus types.</title>
        <authorList>
            <person name="Delius H."/>
            <person name="Hofmann B."/>
        </authorList>
    </citation>
    <scope>NUCLEOTIDE SEQUENCE [GENOMIC DNA]</scope>
</reference>
<accession>P36808</accession>
<dbReference type="EMBL" id="X74473">
    <property type="protein sequence ID" value="CAA52536.1"/>
    <property type="molecule type" value="Genomic_DNA"/>
</dbReference>
<dbReference type="PIR" id="S36497">
    <property type="entry name" value="S36497"/>
</dbReference>
<dbReference type="SMR" id="P36808"/>
<dbReference type="Proteomes" id="UP000009114">
    <property type="component" value="Genome"/>
</dbReference>
<dbReference type="GO" id="GO:0030430">
    <property type="term" value="C:host cell cytoplasm"/>
    <property type="evidence" value="ECO:0007669"/>
    <property type="project" value="UniProtKB-SubCell"/>
</dbReference>
<dbReference type="GO" id="GO:0042025">
    <property type="term" value="C:host cell nucleus"/>
    <property type="evidence" value="ECO:0007669"/>
    <property type="project" value="UniProtKB-SubCell"/>
</dbReference>
<dbReference type="GO" id="GO:0003677">
    <property type="term" value="F:DNA binding"/>
    <property type="evidence" value="ECO:0007669"/>
    <property type="project" value="UniProtKB-UniRule"/>
</dbReference>
<dbReference type="GO" id="GO:0008270">
    <property type="term" value="F:zinc ion binding"/>
    <property type="evidence" value="ECO:0007669"/>
    <property type="project" value="UniProtKB-KW"/>
</dbReference>
<dbReference type="GO" id="GO:0006351">
    <property type="term" value="P:DNA-templated transcription"/>
    <property type="evidence" value="ECO:0007669"/>
    <property type="project" value="UniProtKB-UniRule"/>
</dbReference>
<dbReference type="GO" id="GO:0006355">
    <property type="term" value="P:regulation of DNA-templated transcription"/>
    <property type="evidence" value="ECO:0007669"/>
    <property type="project" value="UniProtKB-UniRule"/>
</dbReference>
<dbReference type="GO" id="GO:0052150">
    <property type="term" value="P:symbiont-mediated perturbation of host apoptosis"/>
    <property type="evidence" value="ECO:0007669"/>
    <property type="project" value="UniProtKB-KW"/>
</dbReference>
<dbReference type="GO" id="GO:0039648">
    <property type="term" value="P:symbiont-mediated perturbation of host ubiquitin-like protein modification"/>
    <property type="evidence" value="ECO:0007669"/>
    <property type="project" value="UniProtKB-UniRule"/>
</dbReference>
<dbReference type="GO" id="GO:0052170">
    <property type="term" value="P:symbiont-mediated suppression of host innate immune response"/>
    <property type="evidence" value="ECO:0007669"/>
    <property type="project" value="UniProtKB-KW"/>
</dbReference>
<dbReference type="GO" id="GO:0039502">
    <property type="term" value="P:symbiont-mediated suppression of host type I interferon-mediated signaling pathway"/>
    <property type="evidence" value="ECO:0007669"/>
    <property type="project" value="UniProtKB-UniRule"/>
</dbReference>
<dbReference type="Gene3D" id="3.30.240.40">
    <property type="entry name" value="E6 early regulatory protein"/>
    <property type="match status" value="2"/>
</dbReference>
<dbReference type="HAMAP" id="MF_04006">
    <property type="entry name" value="HPV_E6"/>
    <property type="match status" value="1"/>
</dbReference>
<dbReference type="InterPro" id="IPR001334">
    <property type="entry name" value="E6"/>
</dbReference>
<dbReference type="InterPro" id="IPR038575">
    <property type="entry name" value="E6_sf"/>
</dbReference>
<dbReference type="Pfam" id="PF00518">
    <property type="entry name" value="E6"/>
    <property type="match status" value="1"/>
</dbReference>
<dbReference type="SUPFAM" id="SSF161229">
    <property type="entry name" value="E6 C-terminal domain-like"/>
    <property type="match status" value="2"/>
</dbReference>
<comment type="function">
    <text evidence="1">Plays a major role in the induction and maintenance of cellular transformation. E6 associates with host UBE3A/E6-AP ubiquitin-protein ligase and modulates its activity. Sequesters tumor suppressor TP53 in the host cytoplasm and modulates its activity by interacting with host EP300 that results in the reduction of TP53 acetylation and activation. In turn, apoptosis induced by DNA damage is inhibited. E6 also protects host keratinocytes from apoptosis by mediating the degradation of host BAK1. May also inhibit host immune response.</text>
</comment>
<comment type="subunit">
    <text evidence="1">Forms homodimers. Interacts with ubiquitin-protein ligase UBE3A/E6-AP; this interaction stimulates UBE3A ubiquitin activity. Interacts with host TP53 and EP300; this interaction inhibits TP53 activity.</text>
</comment>
<comment type="subcellular location">
    <subcellularLocation>
        <location evidence="1">Host cytoplasm</location>
    </subcellularLocation>
    <subcellularLocation>
        <location evidence="1">Host nucleus</location>
    </subcellularLocation>
</comment>
<comment type="miscellaneous">
    <text evidence="1">Belongs to the low risk human alphapapillomavirus family. The cancer-causing human papillomavirus E6 protein has a unique carboxy terminal PDZ domain containing substrate but low risk E6s do not possess this domain.</text>
</comment>
<comment type="similarity">
    <text evidence="2">Belongs to the papillomaviridae E6 protein family.</text>
</comment>
<feature type="chain" id="PRO_0000133347" description="Protein E6">
    <location>
        <begin position="1"/>
        <end position="159"/>
    </location>
</feature>
<feature type="zinc finger region" evidence="1">
    <location>
        <begin position="35"/>
        <end position="71"/>
    </location>
</feature>
<feature type="zinc finger region" evidence="1">
    <location>
        <begin position="108"/>
        <end position="144"/>
    </location>
</feature>
<organism>
    <name type="scientific">Human papillomavirus 27</name>
    <dbReference type="NCBI Taxonomy" id="333752"/>
    <lineage>
        <taxon>Viruses</taxon>
        <taxon>Monodnaviria</taxon>
        <taxon>Shotokuvirae</taxon>
        <taxon>Cossaviricota</taxon>
        <taxon>Papovaviricetes</taxon>
        <taxon>Zurhausenvirales</taxon>
        <taxon>Papillomaviridae</taxon>
        <taxon>Firstpapillomavirinae</taxon>
        <taxon>Alphapapillomavirus</taxon>
        <taxon>Alphapapillomavirus 4</taxon>
    </lineage>
</organism>